<name>NUDI_SALNS</name>
<proteinExistence type="inferred from homology"/>
<protein>
    <recommendedName>
        <fullName evidence="1">Nucleoside triphosphatase NudI</fullName>
        <ecNumber evidence="1">3.6.1.9</ecNumber>
    </recommendedName>
    <alternativeName>
        <fullName evidence="1">Nucleotide diphosphatase NudI</fullName>
    </alternativeName>
    <alternativeName>
        <fullName evidence="1">Pyrimidine deoxynucleoside triphosphate diphosphatase</fullName>
    </alternativeName>
    <alternativeName>
        <fullName evidence="1">dCTP diphosphatase</fullName>
        <ecNumber evidence="1">3.6.1.12</ecNumber>
    </alternativeName>
    <alternativeName>
        <fullName evidence="1">dTTP diphosphatase</fullName>
        <ecNumber evidence="1">3.6.1.-</ecNumber>
    </alternativeName>
    <alternativeName>
        <fullName evidence="1">dUTP diphosphatase</fullName>
        <ecNumber evidence="1">3.6.1.23</ecNumber>
    </alternativeName>
</protein>
<keyword id="KW-0378">Hydrolase</keyword>
<keyword id="KW-0460">Magnesium</keyword>
<gene>
    <name evidence="1" type="primary">nudI</name>
    <name type="ordered locus">SNSL254_A2480</name>
</gene>
<organism>
    <name type="scientific">Salmonella newport (strain SL254)</name>
    <dbReference type="NCBI Taxonomy" id="423368"/>
    <lineage>
        <taxon>Bacteria</taxon>
        <taxon>Pseudomonadati</taxon>
        <taxon>Pseudomonadota</taxon>
        <taxon>Gammaproteobacteria</taxon>
        <taxon>Enterobacterales</taxon>
        <taxon>Enterobacteriaceae</taxon>
        <taxon>Salmonella</taxon>
    </lineage>
</organism>
<sequence>MRQRTIVCPLIQNDGCYLLCKMADNRGVFPGQWALSGGGVEPGERIEEALRREIREELGEQLILSDITPWTFRDDIRVKTYADGRQEEIYMIYLIFDCVSANRDICINDEFQDYAWVKPEELALYDLNVATRHTLALKGLL</sequence>
<feature type="chain" id="PRO_1000188491" description="Nucleoside triphosphatase NudI">
    <location>
        <begin position="1"/>
        <end position="141"/>
    </location>
</feature>
<feature type="domain" description="Nudix hydrolase" evidence="1">
    <location>
        <begin position="1"/>
        <end position="141"/>
    </location>
</feature>
<feature type="short sequence motif" description="Nudix box">
    <location>
        <begin position="38"/>
        <end position="59"/>
    </location>
</feature>
<comment type="function">
    <text evidence="1">Catalyzes the hydrolysis of nucleoside triphosphates, with a preference for pyrimidine deoxynucleoside triphosphates (dUTP, dTTP and dCTP).</text>
</comment>
<comment type="catalytic activity">
    <reaction evidence="1">
        <text>a ribonucleoside 5'-triphosphate + H2O = a ribonucleoside 5'-phosphate + diphosphate + H(+)</text>
        <dbReference type="Rhea" id="RHEA:23996"/>
        <dbReference type="ChEBI" id="CHEBI:15377"/>
        <dbReference type="ChEBI" id="CHEBI:15378"/>
        <dbReference type="ChEBI" id="CHEBI:33019"/>
        <dbReference type="ChEBI" id="CHEBI:58043"/>
        <dbReference type="ChEBI" id="CHEBI:61557"/>
        <dbReference type="EC" id="3.6.1.9"/>
    </reaction>
</comment>
<comment type="catalytic activity">
    <reaction evidence="1">
        <text>a 2'-deoxyribonucleoside 5'-triphosphate + H2O = a 2'-deoxyribonucleoside 5'-phosphate + diphosphate + H(+)</text>
        <dbReference type="Rhea" id="RHEA:44644"/>
        <dbReference type="ChEBI" id="CHEBI:15377"/>
        <dbReference type="ChEBI" id="CHEBI:15378"/>
        <dbReference type="ChEBI" id="CHEBI:33019"/>
        <dbReference type="ChEBI" id="CHEBI:61560"/>
        <dbReference type="ChEBI" id="CHEBI:65317"/>
        <dbReference type="EC" id="3.6.1.9"/>
    </reaction>
</comment>
<comment type="catalytic activity">
    <reaction evidence="1">
        <text>dUTP + H2O = dUMP + diphosphate + H(+)</text>
        <dbReference type="Rhea" id="RHEA:10248"/>
        <dbReference type="ChEBI" id="CHEBI:15377"/>
        <dbReference type="ChEBI" id="CHEBI:15378"/>
        <dbReference type="ChEBI" id="CHEBI:33019"/>
        <dbReference type="ChEBI" id="CHEBI:61555"/>
        <dbReference type="ChEBI" id="CHEBI:246422"/>
        <dbReference type="EC" id="3.6.1.9"/>
    </reaction>
</comment>
<comment type="catalytic activity">
    <reaction evidence="1">
        <text>dUTP + H2O = dUMP + diphosphate + H(+)</text>
        <dbReference type="Rhea" id="RHEA:10248"/>
        <dbReference type="ChEBI" id="CHEBI:15377"/>
        <dbReference type="ChEBI" id="CHEBI:15378"/>
        <dbReference type="ChEBI" id="CHEBI:33019"/>
        <dbReference type="ChEBI" id="CHEBI:61555"/>
        <dbReference type="ChEBI" id="CHEBI:246422"/>
        <dbReference type="EC" id="3.6.1.23"/>
    </reaction>
</comment>
<comment type="catalytic activity">
    <reaction evidence="1">
        <text>dTTP + H2O = dTMP + diphosphate + H(+)</text>
        <dbReference type="Rhea" id="RHEA:28534"/>
        <dbReference type="ChEBI" id="CHEBI:15377"/>
        <dbReference type="ChEBI" id="CHEBI:15378"/>
        <dbReference type="ChEBI" id="CHEBI:33019"/>
        <dbReference type="ChEBI" id="CHEBI:37568"/>
        <dbReference type="ChEBI" id="CHEBI:63528"/>
        <dbReference type="EC" id="3.6.1.9"/>
    </reaction>
</comment>
<comment type="catalytic activity">
    <reaction evidence="1">
        <text>dCTP + H2O = dCMP + diphosphate + H(+)</text>
        <dbReference type="Rhea" id="RHEA:22636"/>
        <dbReference type="ChEBI" id="CHEBI:15377"/>
        <dbReference type="ChEBI" id="CHEBI:15378"/>
        <dbReference type="ChEBI" id="CHEBI:33019"/>
        <dbReference type="ChEBI" id="CHEBI:57566"/>
        <dbReference type="ChEBI" id="CHEBI:61481"/>
        <dbReference type="EC" id="3.6.1.9"/>
    </reaction>
</comment>
<comment type="catalytic activity">
    <reaction evidence="1">
        <text>dCTP + H2O = dCMP + diphosphate + H(+)</text>
        <dbReference type="Rhea" id="RHEA:22636"/>
        <dbReference type="ChEBI" id="CHEBI:15377"/>
        <dbReference type="ChEBI" id="CHEBI:15378"/>
        <dbReference type="ChEBI" id="CHEBI:33019"/>
        <dbReference type="ChEBI" id="CHEBI:57566"/>
        <dbReference type="ChEBI" id="CHEBI:61481"/>
        <dbReference type="EC" id="3.6.1.12"/>
    </reaction>
</comment>
<comment type="cofactor">
    <cofactor evidence="1">
        <name>Mg(2+)</name>
        <dbReference type="ChEBI" id="CHEBI:18420"/>
    </cofactor>
</comment>
<comment type="subunit">
    <text evidence="1">Monomer.</text>
</comment>
<comment type="similarity">
    <text evidence="1">Belongs to the Nudix hydrolase family. NudI subfamily.</text>
</comment>
<evidence type="ECO:0000255" key="1">
    <source>
        <dbReference type="HAMAP-Rule" id="MF_01846"/>
    </source>
</evidence>
<reference key="1">
    <citation type="journal article" date="2011" name="J. Bacteriol.">
        <title>Comparative genomics of 28 Salmonella enterica isolates: evidence for CRISPR-mediated adaptive sublineage evolution.</title>
        <authorList>
            <person name="Fricke W.F."/>
            <person name="Mammel M.K."/>
            <person name="McDermott P.F."/>
            <person name="Tartera C."/>
            <person name="White D.G."/>
            <person name="Leclerc J.E."/>
            <person name="Ravel J."/>
            <person name="Cebula T.A."/>
        </authorList>
    </citation>
    <scope>NUCLEOTIDE SEQUENCE [LARGE SCALE GENOMIC DNA]</scope>
    <source>
        <strain>SL254</strain>
    </source>
</reference>
<accession>B4SYW7</accession>
<dbReference type="EC" id="3.6.1.9" evidence="1"/>
<dbReference type="EC" id="3.6.1.12" evidence="1"/>
<dbReference type="EC" id="3.6.1.-" evidence="1"/>
<dbReference type="EC" id="3.6.1.23" evidence="1"/>
<dbReference type="EMBL" id="CP001113">
    <property type="protein sequence ID" value="ACF65426.1"/>
    <property type="molecule type" value="Genomic_DNA"/>
</dbReference>
<dbReference type="RefSeq" id="WP_001249902.1">
    <property type="nucleotide sequence ID" value="NZ_CCMR01000001.1"/>
</dbReference>
<dbReference type="SMR" id="B4SYW7"/>
<dbReference type="KEGG" id="see:SNSL254_A2480"/>
<dbReference type="HOGENOM" id="CLU_037162_31_0_6"/>
<dbReference type="Proteomes" id="UP000008824">
    <property type="component" value="Chromosome"/>
</dbReference>
<dbReference type="GO" id="GO:0047840">
    <property type="term" value="F:dCTP diphosphatase activity"/>
    <property type="evidence" value="ECO:0007669"/>
    <property type="project" value="UniProtKB-EC"/>
</dbReference>
<dbReference type="GO" id="GO:0036218">
    <property type="term" value="F:dTTP diphosphatase activity"/>
    <property type="evidence" value="ECO:0007669"/>
    <property type="project" value="RHEA"/>
</dbReference>
<dbReference type="GO" id="GO:0004170">
    <property type="term" value="F:dUTP diphosphatase activity"/>
    <property type="evidence" value="ECO:0007669"/>
    <property type="project" value="UniProtKB-EC"/>
</dbReference>
<dbReference type="GO" id="GO:0000287">
    <property type="term" value="F:magnesium ion binding"/>
    <property type="evidence" value="ECO:0007669"/>
    <property type="project" value="UniProtKB-UniRule"/>
</dbReference>
<dbReference type="CDD" id="cd04696">
    <property type="entry name" value="NUDIX_NudI"/>
    <property type="match status" value="1"/>
</dbReference>
<dbReference type="Gene3D" id="3.90.79.10">
    <property type="entry name" value="Nucleoside Triphosphate Pyrophosphohydrolase"/>
    <property type="match status" value="1"/>
</dbReference>
<dbReference type="HAMAP" id="MF_01846">
    <property type="entry name" value="Nudix_NudI"/>
    <property type="match status" value="1"/>
</dbReference>
<dbReference type="InterPro" id="IPR023781">
    <property type="entry name" value="Nucleoside_triphosphatase_NudI"/>
</dbReference>
<dbReference type="InterPro" id="IPR020476">
    <property type="entry name" value="Nudix_hydrolase"/>
</dbReference>
<dbReference type="InterPro" id="IPR015797">
    <property type="entry name" value="NUDIX_hydrolase-like_dom_sf"/>
</dbReference>
<dbReference type="InterPro" id="IPR020084">
    <property type="entry name" value="NUDIX_hydrolase_CS"/>
</dbReference>
<dbReference type="InterPro" id="IPR000086">
    <property type="entry name" value="NUDIX_hydrolase_dom"/>
</dbReference>
<dbReference type="NCBIfam" id="NF012016">
    <property type="entry name" value="PRK15472.1"/>
    <property type="match status" value="1"/>
</dbReference>
<dbReference type="PANTHER" id="PTHR43046">
    <property type="entry name" value="GDP-MANNOSE MANNOSYL HYDROLASE"/>
    <property type="match status" value="1"/>
</dbReference>
<dbReference type="PANTHER" id="PTHR43046:SF14">
    <property type="entry name" value="MUTT_NUDIX FAMILY PROTEIN"/>
    <property type="match status" value="1"/>
</dbReference>
<dbReference type="Pfam" id="PF00293">
    <property type="entry name" value="NUDIX"/>
    <property type="match status" value="1"/>
</dbReference>
<dbReference type="PRINTS" id="PR00502">
    <property type="entry name" value="NUDIXFAMILY"/>
</dbReference>
<dbReference type="SUPFAM" id="SSF55811">
    <property type="entry name" value="Nudix"/>
    <property type="match status" value="1"/>
</dbReference>
<dbReference type="PROSITE" id="PS51462">
    <property type="entry name" value="NUDIX"/>
    <property type="match status" value="1"/>
</dbReference>
<dbReference type="PROSITE" id="PS00893">
    <property type="entry name" value="NUDIX_BOX"/>
    <property type="match status" value="1"/>
</dbReference>